<accession>Q5X866</accession>
<name>RPOB_LEGPA</name>
<gene>
    <name evidence="1" type="primary">rpoB</name>
    <name type="ordered locus">lpp0387</name>
</gene>
<keyword id="KW-0240">DNA-directed RNA polymerase</keyword>
<keyword id="KW-0548">Nucleotidyltransferase</keyword>
<keyword id="KW-0804">Transcription</keyword>
<keyword id="KW-0808">Transferase</keyword>
<proteinExistence type="inferred from homology"/>
<feature type="chain" id="PRO_0000224068" description="DNA-directed RNA polymerase subunit beta">
    <location>
        <begin position="1"/>
        <end position="1368"/>
    </location>
</feature>
<evidence type="ECO:0000255" key="1">
    <source>
        <dbReference type="HAMAP-Rule" id="MF_01321"/>
    </source>
</evidence>
<reference key="1">
    <citation type="journal article" date="2004" name="Nat. Genet.">
        <title>Evidence in the Legionella pneumophila genome for exploitation of host cell functions and high genome plasticity.</title>
        <authorList>
            <person name="Cazalet C."/>
            <person name="Rusniok C."/>
            <person name="Brueggemann H."/>
            <person name="Zidane N."/>
            <person name="Magnier A."/>
            <person name="Ma L."/>
            <person name="Tichit M."/>
            <person name="Jarraud S."/>
            <person name="Bouchier C."/>
            <person name="Vandenesch F."/>
            <person name="Kunst F."/>
            <person name="Etienne J."/>
            <person name="Glaser P."/>
            <person name="Buchrieser C."/>
        </authorList>
    </citation>
    <scope>NUCLEOTIDE SEQUENCE [LARGE SCALE GENOMIC DNA]</scope>
    <source>
        <strain>Paris</strain>
    </source>
</reference>
<dbReference type="EC" id="2.7.7.6" evidence="1"/>
<dbReference type="EMBL" id="CR628336">
    <property type="protein sequence ID" value="CAH11535.1"/>
    <property type="molecule type" value="Genomic_DNA"/>
</dbReference>
<dbReference type="RefSeq" id="WP_011213004.1">
    <property type="nucleotide sequence ID" value="NC_006368.1"/>
</dbReference>
<dbReference type="SMR" id="Q5X866"/>
<dbReference type="KEGG" id="lpp:lpp0387"/>
<dbReference type="LegioList" id="lpp0387"/>
<dbReference type="HOGENOM" id="CLU_000524_4_3_6"/>
<dbReference type="GO" id="GO:0000428">
    <property type="term" value="C:DNA-directed RNA polymerase complex"/>
    <property type="evidence" value="ECO:0007669"/>
    <property type="project" value="UniProtKB-KW"/>
</dbReference>
<dbReference type="GO" id="GO:0003677">
    <property type="term" value="F:DNA binding"/>
    <property type="evidence" value="ECO:0007669"/>
    <property type="project" value="UniProtKB-UniRule"/>
</dbReference>
<dbReference type="GO" id="GO:0003899">
    <property type="term" value="F:DNA-directed RNA polymerase activity"/>
    <property type="evidence" value="ECO:0007669"/>
    <property type="project" value="UniProtKB-UniRule"/>
</dbReference>
<dbReference type="GO" id="GO:0032549">
    <property type="term" value="F:ribonucleoside binding"/>
    <property type="evidence" value="ECO:0007669"/>
    <property type="project" value="InterPro"/>
</dbReference>
<dbReference type="GO" id="GO:0006351">
    <property type="term" value="P:DNA-templated transcription"/>
    <property type="evidence" value="ECO:0007669"/>
    <property type="project" value="UniProtKB-UniRule"/>
</dbReference>
<dbReference type="CDD" id="cd00653">
    <property type="entry name" value="RNA_pol_B_RPB2"/>
    <property type="match status" value="1"/>
</dbReference>
<dbReference type="FunFam" id="2.40.50.100:FF:000006">
    <property type="entry name" value="DNA-directed RNA polymerase subunit beta"/>
    <property type="match status" value="1"/>
</dbReference>
<dbReference type="FunFam" id="2.40.50.150:FF:000001">
    <property type="entry name" value="DNA-directed RNA polymerase subunit beta"/>
    <property type="match status" value="1"/>
</dbReference>
<dbReference type="FunFam" id="3.90.1800.10:FF:000001">
    <property type="entry name" value="DNA-directed RNA polymerase subunit beta"/>
    <property type="match status" value="1"/>
</dbReference>
<dbReference type="Gene3D" id="2.40.50.100">
    <property type="match status" value="1"/>
</dbReference>
<dbReference type="Gene3D" id="2.40.50.150">
    <property type="match status" value="1"/>
</dbReference>
<dbReference type="Gene3D" id="3.90.1100.10">
    <property type="match status" value="2"/>
</dbReference>
<dbReference type="Gene3D" id="2.30.150.10">
    <property type="entry name" value="DNA-directed RNA polymerase, beta subunit, external 1 domain"/>
    <property type="match status" value="1"/>
</dbReference>
<dbReference type="Gene3D" id="2.40.270.10">
    <property type="entry name" value="DNA-directed RNA polymerase, subunit 2, domain 6"/>
    <property type="match status" value="2"/>
</dbReference>
<dbReference type="Gene3D" id="3.90.1800.10">
    <property type="entry name" value="RNA polymerase alpha subunit dimerisation domain"/>
    <property type="match status" value="1"/>
</dbReference>
<dbReference type="Gene3D" id="3.90.1110.10">
    <property type="entry name" value="RNA polymerase Rpb2, domain 2"/>
    <property type="match status" value="2"/>
</dbReference>
<dbReference type="HAMAP" id="MF_01321">
    <property type="entry name" value="RNApol_bact_RpoB"/>
    <property type="match status" value="1"/>
</dbReference>
<dbReference type="InterPro" id="IPR042107">
    <property type="entry name" value="DNA-dir_RNA_pol_bsu_ext_1_sf"/>
</dbReference>
<dbReference type="InterPro" id="IPR019462">
    <property type="entry name" value="DNA-dir_RNA_pol_bsu_external_1"/>
</dbReference>
<dbReference type="InterPro" id="IPR015712">
    <property type="entry name" value="DNA-dir_RNA_pol_su2"/>
</dbReference>
<dbReference type="InterPro" id="IPR007120">
    <property type="entry name" value="DNA-dir_RNAP_su2_dom"/>
</dbReference>
<dbReference type="InterPro" id="IPR037033">
    <property type="entry name" value="DNA-dir_RNAP_su2_hyb_sf"/>
</dbReference>
<dbReference type="InterPro" id="IPR010243">
    <property type="entry name" value="RNA_pol_bsu_bac"/>
</dbReference>
<dbReference type="InterPro" id="IPR007121">
    <property type="entry name" value="RNA_pol_bsu_CS"/>
</dbReference>
<dbReference type="InterPro" id="IPR007644">
    <property type="entry name" value="RNA_pol_bsu_protrusion"/>
</dbReference>
<dbReference type="InterPro" id="IPR007642">
    <property type="entry name" value="RNA_pol_Rpb2_2"/>
</dbReference>
<dbReference type="InterPro" id="IPR037034">
    <property type="entry name" value="RNA_pol_Rpb2_2_sf"/>
</dbReference>
<dbReference type="InterPro" id="IPR007645">
    <property type="entry name" value="RNA_pol_Rpb2_3"/>
</dbReference>
<dbReference type="InterPro" id="IPR007641">
    <property type="entry name" value="RNA_pol_Rpb2_7"/>
</dbReference>
<dbReference type="InterPro" id="IPR014724">
    <property type="entry name" value="RNA_pol_RPB2_OB-fold"/>
</dbReference>
<dbReference type="NCBIfam" id="NF001616">
    <property type="entry name" value="PRK00405.1"/>
    <property type="match status" value="1"/>
</dbReference>
<dbReference type="NCBIfam" id="TIGR02013">
    <property type="entry name" value="rpoB"/>
    <property type="match status" value="1"/>
</dbReference>
<dbReference type="PANTHER" id="PTHR20856">
    <property type="entry name" value="DNA-DIRECTED RNA POLYMERASE I SUBUNIT 2"/>
    <property type="match status" value="1"/>
</dbReference>
<dbReference type="Pfam" id="PF04563">
    <property type="entry name" value="RNA_pol_Rpb2_1"/>
    <property type="match status" value="1"/>
</dbReference>
<dbReference type="Pfam" id="PF04561">
    <property type="entry name" value="RNA_pol_Rpb2_2"/>
    <property type="match status" value="2"/>
</dbReference>
<dbReference type="Pfam" id="PF04565">
    <property type="entry name" value="RNA_pol_Rpb2_3"/>
    <property type="match status" value="1"/>
</dbReference>
<dbReference type="Pfam" id="PF10385">
    <property type="entry name" value="RNA_pol_Rpb2_45"/>
    <property type="match status" value="1"/>
</dbReference>
<dbReference type="Pfam" id="PF00562">
    <property type="entry name" value="RNA_pol_Rpb2_6"/>
    <property type="match status" value="1"/>
</dbReference>
<dbReference type="Pfam" id="PF04560">
    <property type="entry name" value="RNA_pol_Rpb2_7"/>
    <property type="match status" value="1"/>
</dbReference>
<dbReference type="SUPFAM" id="SSF64484">
    <property type="entry name" value="beta and beta-prime subunits of DNA dependent RNA-polymerase"/>
    <property type="match status" value="1"/>
</dbReference>
<dbReference type="PROSITE" id="PS01166">
    <property type="entry name" value="RNA_POL_BETA"/>
    <property type="match status" value="1"/>
</dbReference>
<organism>
    <name type="scientific">Legionella pneumophila (strain Paris)</name>
    <dbReference type="NCBI Taxonomy" id="297246"/>
    <lineage>
        <taxon>Bacteria</taxon>
        <taxon>Pseudomonadati</taxon>
        <taxon>Pseudomonadota</taxon>
        <taxon>Gammaproteobacteria</taxon>
        <taxon>Legionellales</taxon>
        <taxon>Legionellaceae</taxon>
        <taxon>Legionella</taxon>
    </lineage>
</organism>
<comment type="function">
    <text evidence="1">DNA-dependent RNA polymerase catalyzes the transcription of DNA into RNA using the four ribonucleoside triphosphates as substrates.</text>
</comment>
<comment type="catalytic activity">
    <reaction evidence="1">
        <text>RNA(n) + a ribonucleoside 5'-triphosphate = RNA(n+1) + diphosphate</text>
        <dbReference type="Rhea" id="RHEA:21248"/>
        <dbReference type="Rhea" id="RHEA-COMP:14527"/>
        <dbReference type="Rhea" id="RHEA-COMP:17342"/>
        <dbReference type="ChEBI" id="CHEBI:33019"/>
        <dbReference type="ChEBI" id="CHEBI:61557"/>
        <dbReference type="ChEBI" id="CHEBI:140395"/>
        <dbReference type="EC" id="2.7.7.6"/>
    </reaction>
</comment>
<comment type="subunit">
    <text evidence="1">The RNAP catalytic core consists of 2 alpha, 1 beta, 1 beta' and 1 omega subunit. When a sigma factor is associated with the core the holoenzyme is formed, which can initiate transcription.</text>
</comment>
<comment type="similarity">
    <text evidence="1">Belongs to the RNA polymerase beta chain family.</text>
</comment>
<sequence length="1368" mass="152742">MAVAEAKPQYSHAEKKRFRKSFGKQTDIMPIPNLLEIQLKSYRDFLQTDTKLSEQLNTGLHAAFSSVFPIESFSGNARLEYVGYKLGEPAFDVRECKLRGLTYSAPLRVKIRLVVLDKDASDDPKPIKDIREQDVFMGEIPLMTDVGTFVVNGTERVVVSQLHRSPGVIFEHDKGKTHSSGKLLYSARIIPYRGSWLDFEFDPKDCVYVRIDRRRKLPVSILLRALGYEAEDILSEFFETTRCHLKNGEYHIDLIPQRLRGEIASFDIHVPETGELIVEQGRRITARHIKQMEKSQMQDLVVPRDYLIGKTLAKNIIDTSTGEFLAQANDEITEELLDAMANHGILQIDMIYTNDLDHGSYISDTLKIDPTGSQLEALVEIYRMMRPGEPPTKEAAEALFKNLFFVEERYDLSAVGRMKFNRRVGIKSDEGPGTLTKEDILSVIKTLIDIRNGIGMVDDIDHLGNRRVRSVGEMTENQFRVGLVRVERAVKERLSLVESENLMPQDLINAKPVSAAIKEFFGSSQLSQFMDQVNPLSGVTHKRRVSALGPGGLTRERAGFEVRDVHTTHYGRVCPIETPEGPNIGLINSLSVYARTNEYGFIETPCRKVVNGRVTDEVEYLSAIEEVDQYIAQSNVELDAQGNILADLVPCRHQNEFSLTTPDKINYMDVSPKQIVSVAASLIPFLEHDDANRALMGSNMQRQAVPTLRSEKPLVGTGMERIVASDSGVSVVAKRGGVIDLVDASRIVVRVNDDETTAGETGVDIYNLTKYFRSNQDTCINQRPIVSTGDRIQRGDVLADGPCTDMGELALGQNLLVAFMPWNGYNFEDSILISERIVHDDRFTTIHIEELTCIARDTKLGTEEITADIPNVGESALSNLDESGVVYIGAEVKAGDILVGKVTPKGETQLTPEEKLLRAIFGEKASDVKDSSLRVPSGMNGTVIDVQVFTRDGLEKDARAKSIEEEHLARVRKDLIDERRIREEDIYHRVSHLLLDKVATGGPGSLKPGSKITQDYLDKVEREKWFDIRIEDDAVSQQLEQLSKQLELLTKEMEKRFNDSRKKIIQGDDLAPGVLKIVKVYLAVKRRIQPGDKMAGRHGNKGVISIVVPVEDMPHMEDGTAVDIVLNPLGVPSRMNIGQVLETHLGLAAKGLGRKIAQMLDERQTPEAIKAYLEKIYNHDGVQRVNLKCLNDDELMTLADNLRAGVPMATPVFDGATEQEIKSMLQLADLPADGKTVLIDGRTGNKFDNTVTVGYMYMLKLNHLVDDKMHARSTGSYSLVTQQPLGGKAQFGGQRFGEMEVWALEAYGAAYTLQEMLTVKSDDVGGRTKIYKNIVDGDHRMDPGMPESFNVLLKEIRALGIDIELEHD</sequence>
<protein>
    <recommendedName>
        <fullName evidence="1">DNA-directed RNA polymerase subunit beta</fullName>
        <shortName evidence="1">RNAP subunit beta</shortName>
        <ecNumber evidence="1">2.7.7.6</ecNumber>
    </recommendedName>
    <alternativeName>
        <fullName evidence="1">RNA polymerase subunit beta</fullName>
    </alternativeName>
    <alternativeName>
        <fullName evidence="1">Transcriptase subunit beta</fullName>
    </alternativeName>
</protein>